<sequence length="142" mass="16019">MKTFTAKPETVKRDWYVVDATGKTLGRLATELARRLRGKHKAEYTPHVDTGDYIIVLNADKVAVTGNKRTDKVYYHHTGHIGGIKQATFEEMIARRPERVIEIAVKGMLPKGPLGRAMFRKLKVYAGNEHNHAAQQPQVLDI</sequence>
<keyword id="KW-0687">Ribonucleoprotein</keyword>
<keyword id="KW-0689">Ribosomal protein</keyword>
<accession>B1XHK4</accession>
<dbReference type="EMBL" id="CP000948">
    <property type="protein sequence ID" value="ACB04305.1"/>
    <property type="molecule type" value="Genomic_DNA"/>
</dbReference>
<dbReference type="RefSeq" id="WP_000847559.1">
    <property type="nucleotide sequence ID" value="NC_010473.1"/>
</dbReference>
<dbReference type="SMR" id="B1XHK4"/>
<dbReference type="GeneID" id="89518067"/>
<dbReference type="KEGG" id="ecd:ECDH10B_3408"/>
<dbReference type="HOGENOM" id="CLU_082184_2_2_6"/>
<dbReference type="GO" id="GO:0022625">
    <property type="term" value="C:cytosolic large ribosomal subunit"/>
    <property type="evidence" value="ECO:0007669"/>
    <property type="project" value="TreeGrafter"/>
</dbReference>
<dbReference type="GO" id="GO:0003729">
    <property type="term" value="F:mRNA binding"/>
    <property type="evidence" value="ECO:0007669"/>
    <property type="project" value="TreeGrafter"/>
</dbReference>
<dbReference type="GO" id="GO:0003735">
    <property type="term" value="F:structural constituent of ribosome"/>
    <property type="evidence" value="ECO:0007669"/>
    <property type="project" value="InterPro"/>
</dbReference>
<dbReference type="GO" id="GO:0017148">
    <property type="term" value="P:negative regulation of translation"/>
    <property type="evidence" value="ECO:0007669"/>
    <property type="project" value="TreeGrafter"/>
</dbReference>
<dbReference type="GO" id="GO:0006412">
    <property type="term" value="P:translation"/>
    <property type="evidence" value="ECO:0007669"/>
    <property type="project" value="UniProtKB-UniRule"/>
</dbReference>
<dbReference type="CDD" id="cd00392">
    <property type="entry name" value="Ribosomal_L13"/>
    <property type="match status" value="1"/>
</dbReference>
<dbReference type="FunFam" id="3.90.1180.10:FF:000001">
    <property type="entry name" value="50S ribosomal protein L13"/>
    <property type="match status" value="1"/>
</dbReference>
<dbReference type="Gene3D" id="3.90.1180.10">
    <property type="entry name" value="Ribosomal protein L13"/>
    <property type="match status" value="1"/>
</dbReference>
<dbReference type="HAMAP" id="MF_01366">
    <property type="entry name" value="Ribosomal_uL13"/>
    <property type="match status" value="1"/>
</dbReference>
<dbReference type="InterPro" id="IPR005822">
    <property type="entry name" value="Ribosomal_uL13"/>
</dbReference>
<dbReference type="InterPro" id="IPR005823">
    <property type="entry name" value="Ribosomal_uL13_bac-type"/>
</dbReference>
<dbReference type="InterPro" id="IPR023563">
    <property type="entry name" value="Ribosomal_uL13_CS"/>
</dbReference>
<dbReference type="InterPro" id="IPR036899">
    <property type="entry name" value="Ribosomal_uL13_sf"/>
</dbReference>
<dbReference type="NCBIfam" id="TIGR01066">
    <property type="entry name" value="rplM_bact"/>
    <property type="match status" value="1"/>
</dbReference>
<dbReference type="PANTHER" id="PTHR11545:SF2">
    <property type="entry name" value="LARGE RIBOSOMAL SUBUNIT PROTEIN UL13M"/>
    <property type="match status" value="1"/>
</dbReference>
<dbReference type="PANTHER" id="PTHR11545">
    <property type="entry name" value="RIBOSOMAL PROTEIN L13"/>
    <property type="match status" value="1"/>
</dbReference>
<dbReference type="Pfam" id="PF00572">
    <property type="entry name" value="Ribosomal_L13"/>
    <property type="match status" value="1"/>
</dbReference>
<dbReference type="PIRSF" id="PIRSF002181">
    <property type="entry name" value="Ribosomal_L13"/>
    <property type="match status" value="1"/>
</dbReference>
<dbReference type="SUPFAM" id="SSF52161">
    <property type="entry name" value="Ribosomal protein L13"/>
    <property type="match status" value="1"/>
</dbReference>
<dbReference type="PROSITE" id="PS00783">
    <property type="entry name" value="RIBOSOMAL_L13"/>
    <property type="match status" value="1"/>
</dbReference>
<organism>
    <name type="scientific">Escherichia coli (strain K12 / DH10B)</name>
    <dbReference type="NCBI Taxonomy" id="316385"/>
    <lineage>
        <taxon>Bacteria</taxon>
        <taxon>Pseudomonadati</taxon>
        <taxon>Pseudomonadota</taxon>
        <taxon>Gammaproteobacteria</taxon>
        <taxon>Enterobacterales</taxon>
        <taxon>Enterobacteriaceae</taxon>
        <taxon>Escherichia</taxon>
    </lineage>
</organism>
<comment type="function">
    <text evidence="1">This protein is one of the early assembly proteins of the 50S ribosomal subunit, although it is not seen to bind rRNA by itself. It is important during the early stages of 50S assembly.</text>
</comment>
<comment type="subunit">
    <text evidence="1">Part of the 50S ribosomal subunit.</text>
</comment>
<comment type="similarity">
    <text evidence="1">Belongs to the universal ribosomal protein uL13 family.</text>
</comment>
<evidence type="ECO:0000255" key="1">
    <source>
        <dbReference type="HAMAP-Rule" id="MF_01366"/>
    </source>
</evidence>
<evidence type="ECO:0000305" key="2"/>
<reference key="1">
    <citation type="journal article" date="2008" name="J. Bacteriol.">
        <title>The complete genome sequence of Escherichia coli DH10B: insights into the biology of a laboratory workhorse.</title>
        <authorList>
            <person name="Durfee T."/>
            <person name="Nelson R."/>
            <person name="Baldwin S."/>
            <person name="Plunkett G. III"/>
            <person name="Burland V."/>
            <person name="Mau B."/>
            <person name="Petrosino J.F."/>
            <person name="Qin X."/>
            <person name="Muzny D.M."/>
            <person name="Ayele M."/>
            <person name="Gibbs R.A."/>
            <person name="Csorgo B."/>
            <person name="Posfai G."/>
            <person name="Weinstock G.M."/>
            <person name="Blattner F.R."/>
        </authorList>
    </citation>
    <scope>NUCLEOTIDE SEQUENCE [LARGE SCALE GENOMIC DNA]</scope>
    <source>
        <strain>K12 / DH10B</strain>
    </source>
</reference>
<gene>
    <name evidence="1" type="primary">rplM</name>
    <name type="ordered locus">ECDH10B_3408</name>
</gene>
<protein>
    <recommendedName>
        <fullName evidence="1">Large ribosomal subunit protein uL13</fullName>
    </recommendedName>
    <alternativeName>
        <fullName evidence="2">50S ribosomal protein L13</fullName>
    </alternativeName>
</protein>
<feature type="chain" id="PRO_1000144124" description="Large ribosomal subunit protein uL13">
    <location>
        <begin position="1"/>
        <end position="142"/>
    </location>
</feature>
<name>RL13_ECODH</name>
<proteinExistence type="inferred from homology"/>